<evidence type="ECO:0000255" key="1">
    <source>
        <dbReference type="PROSITE-ProRule" id="PRU00227"/>
    </source>
</evidence>
<evidence type="ECO:0000256" key="2">
    <source>
        <dbReference type="SAM" id="MobiDB-lite"/>
    </source>
</evidence>
<evidence type="ECO:0000269" key="3">
    <source>
    </source>
</evidence>
<evidence type="ECO:0000269" key="4">
    <source>
    </source>
</evidence>
<evidence type="ECO:0000269" key="5">
    <source>
    </source>
</evidence>
<evidence type="ECO:0000303" key="6">
    <source>
    </source>
</evidence>
<reference key="1">
    <citation type="journal article" date="2004" name="Mol. Microbiol.">
        <title>The sirodesmin biosynthetic gene cluster of the plant pathogenic fungus Leptosphaeria maculans.</title>
        <authorList>
            <person name="Gardiner D.M."/>
            <person name="Cozijnsen A.J."/>
            <person name="Wilson L.M."/>
            <person name="Pedras M.S."/>
            <person name="Howlett B.J."/>
        </authorList>
    </citation>
    <scope>NUCLEOTIDE SEQUENCE [GENOMIC DNA]</scope>
    <scope>FUNCTION</scope>
    <scope>INDUCTION</scope>
</reference>
<reference key="2">
    <citation type="journal article" date="2007" name="Mol. Plant Pathol.">
        <title>Production of the toxin sirodesmin PL by Leptosphaeria maculans during infection of Brassica napus.</title>
        <authorList>
            <person name="Elliott C.E."/>
            <person name="Gardiner D.M."/>
            <person name="Thomas G."/>
            <person name="Cozijnsen A."/>
            <person name="Van de Wouw A."/>
            <person name="Howlett B.J."/>
        </authorList>
    </citation>
    <scope>INDUCTION</scope>
</reference>
<reference key="3">
    <citation type="journal article" date="2008" name="Fungal Genet. Biol.">
        <title>A Zn(II)2Cys6 DNA binding protein regulates the sirodesmin PL biosynthetic gene cluster in Leptosphaeria maculans.</title>
        <authorList>
            <person name="Fox E.M."/>
            <person name="Gardiner D.M."/>
            <person name="Keller N.P."/>
            <person name="Howlett B.J."/>
        </authorList>
    </citation>
    <scope>FUNCTION</scope>
    <scope>DISRUPTION PHENOTYPE</scope>
</reference>
<gene>
    <name evidence="6" type="primary">sirZ</name>
</gene>
<keyword id="KW-0238">DNA-binding</keyword>
<keyword id="KW-0479">Metal-binding</keyword>
<keyword id="KW-0539">Nucleus</keyword>
<keyword id="KW-0804">Transcription</keyword>
<keyword id="KW-0805">Transcription regulation</keyword>
<keyword id="KW-0843">Virulence</keyword>
<dbReference type="EMBL" id="AY553235">
    <property type="protein sequence ID" value="AAS92551.1"/>
    <property type="molecule type" value="Genomic_DNA"/>
</dbReference>
<dbReference type="SMR" id="Q6Q877"/>
<dbReference type="OMA" id="HISHMAN"/>
<dbReference type="PHI-base" id="PHI:11707"/>
<dbReference type="GO" id="GO:0005634">
    <property type="term" value="C:nucleus"/>
    <property type="evidence" value="ECO:0007669"/>
    <property type="project" value="UniProtKB-SubCell"/>
</dbReference>
<dbReference type="GO" id="GO:0000981">
    <property type="term" value="F:DNA-binding transcription factor activity, RNA polymerase II-specific"/>
    <property type="evidence" value="ECO:0007669"/>
    <property type="project" value="InterPro"/>
</dbReference>
<dbReference type="GO" id="GO:0043565">
    <property type="term" value="F:sequence-specific DNA binding"/>
    <property type="evidence" value="ECO:0007669"/>
    <property type="project" value="TreeGrafter"/>
</dbReference>
<dbReference type="GO" id="GO:0008270">
    <property type="term" value="F:zinc ion binding"/>
    <property type="evidence" value="ECO:0007669"/>
    <property type="project" value="InterPro"/>
</dbReference>
<dbReference type="GO" id="GO:0045944">
    <property type="term" value="P:positive regulation of transcription by RNA polymerase II"/>
    <property type="evidence" value="ECO:0007669"/>
    <property type="project" value="TreeGrafter"/>
</dbReference>
<dbReference type="CDD" id="cd00067">
    <property type="entry name" value="GAL4"/>
    <property type="match status" value="1"/>
</dbReference>
<dbReference type="Gene3D" id="4.10.240.10">
    <property type="entry name" value="Zn(2)-C6 fungal-type DNA-binding domain"/>
    <property type="match status" value="1"/>
</dbReference>
<dbReference type="InterPro" id="IPR051711">
    <property type="entry name" value="Stress_Response_Reg"/>
</dbReference>
<dbReference type="InterPro" id="IPR036864">
    <property type="entry name" value="Zn2-C6_fun-type_DNA-bd_sf"/>
</dbReference>
<dbReference type="InterPro" id="IPR001138">
    <property type="entry name" value="Zn2Cys6_DnaBD"/>
</dbReference>
<dbReference type="PANTHER" id="PTHR47540">
    <property type="entry name" value="THIAMINE REPRESSIBLE GENES REGULATORY PROTEIN THI5"/>
    <property type="match status" value="1"/>
</dbReference>
<dbReference type="PANTHER" id="PTHR47540:SF6">
    <property type="entry name" value="ZN(II)2CYS6 TRANSCRIPTION FACTOR (EUROFUNG)"/>
    <property type="match status" value="1"/>
</dbReference>
<dbReference type="Pfam" id="PF00172">
    <property type="entry name" value="Zn_clus"/>
    <property type="match status" value="1"/>
</dbReference>
<dbReference type="SMART" id="SM00066">
    <property type="entry name" value="GAL4"/>
    <property type="match status" value="1"/>
</dbReference>
<dbReference type="SUPFAM" id="SSF57701">
    <property type="entry name" value="Zn2/Cys6 DNA-binding domain"/>
    <property type="match status" value="1"/>
</dbReference>
<dbReference type="PROSITE" id="PS00463">
    <property type="entry name" value="ZN2_CY6_FUNGAL_1"/>
    <property type="match status" value="1"/>
</dbReference>
<dbReference type="PROSITE" id="PS50048">
    <property type="entry name" value="ZN2_CY6_FUNGAL_2"/>
    <property type="match status" value="1"/>
</dbReference>
<feature type="chain" id="PRO_0000437713" description="C6 finger domain transcription factor sirZ">
    <location>
        <begin position="1"/>
        <end position="500"/>
    </location>
</feature>
<feature type="DNA-binding region" description="Zn(2)-C6 fungal-type" evidence="1">
    <location>
        <begin position="28"/>
        <end position="54"/>
    </location>
</feature>
<feature type="region of interest" description="Disordered" evidence="2">
    <location>
        <begin position="79"/>
        <end position="168"/>
    </location>
</feature>
<feature type="region of interest" description="Disordered" evidence="2">
    <location>
        <begin position="302"/>
        <end position="332"/>
    </location>
</feature>
<feature type="compositionally biased region" description="Basic and acidic residues" evidence="2">
    <location>
        <begin position="79"/>
        <end position="88"/>
    </location>
</feature>
<feature type="compositionally biased region" description="Acidic residues" evidence="2">
    <location>
        <begin position="135"/>
        <end position="147"/>
    </location>
</feature>
<feature type="compositionally biased region" description="Low complexity" evidence="2">
    <location>
        <begin position="154"/>
        <end position="165"/>
    </location>
</feature>
<feature type="compositionally biased region" description="Polar residues" evidence="2">
    <location>
        <begin position="304"/>
        <end position="316"/>
    </location>
</feature>
<feature type="compositionally biased region" description="Low complexity" evidence="2">
    <location>
        <begin position="317"/>
        <end position="328"/>
    </location>
</feature>
<accession>Q6Q877</accession>
<protein>
    <recommendedName>
        <fullName evidence="6">C6 finger domain transcription factor sirZ</fullName>
    </recommendedName>
    <alternativeName>
        <fullName evidence="6">Sirodesmin production protein Z</fullName>
    </alternativeName>
</protein>
<sequence>MSPAPPPCGFAEAESTNTKSAPKFRSACNACHEVKLKCLGGQPCARCRNKQVECVYSHAARIGKPKGSRNKKTLERLRQAKAMSRPEETQGEETTSLTAVDASQAINCRALSGSTRRDSSPLPPPHSDTDSAEGGAEEELLDQEERDEAEKPPLVENPPNLNPLEQISPPREDFLDLLAHSSLLNNTQHDLQHPTADMVPDGLAGFPHASTSAADDLSWMTSPTKSLLSTTFPAIEDDLQDLQDPFLCSSWRSACLPPSSSRSSFHFPRFNHFAEDTMGLEYASGMDATRSLGDPPHAMARAGSFSTSGPGSSQEGSHFLSSRHSQSSGMYQPVPKRPSCSCLKLQASALCRIHLVDRSHADMRGDTVLATASTILDSCNALILCPSCATDYKFLLLAIMTVRILLCWLRGLSATRTQNDNANMKLTLGEYEISGEEEAIIKNMLVSRALEKVKIAVRRLRERVNSITIQEVGNCSESTQRWDLTYIRMCLDHMEKQVGC</sequence>
<organism>
    <name type="scientific">Leptosphaeria maculans</name>
    <name type="common">Blackleg fungus</name>
    <name type="synonym">Phoma lingam</name>
    <dbReference type="NCBI Taxonomy" id="5022"/>
    <lineage>
        <taxon>Eukaryota</taxon>
        <taxon>Fungi</taxon>
        <taxon>Dikarya</taxon>
        <taxon>Ascomycota</taxon>
        <taxon>Pezizomycotina</taxon>
        <taxon>Dothideomycetes</taxon>
        <taxon>Pleosporomycetidae</taxon>
        <taxon>Pleosporales</taxon>
        <taxon>Pleosporineae</taxon>
        <taxon>Leptosphaeriaceae</taxon>
        <taxon>Plenodomus</taxon>
        <taxon>Plenodomus lingam/Leptosphaeria maculans species complex</taxon>
    </lineage>
</organism>
<comment type="function">
    <text evidence="3 4">Transcription factor that regulates sirodesmin production and contributes to virulence (PubMed:15387811, PubMed:18023597). Probably binds to the consensus motif TCGGN(3)CCGA found in the promoters of sirT, sirP, sirO, sirN, sirP, sirB, sirR, sirJ and sirQ (PubMed:18023597).</text>
</comment>
<comment type="subcellular location">
    <subcellularLocation>
        <location evidence="1">Nucleus</location>
    </subcellularLocation>
</comment>
<comment type="induction">
    <text evidence="3 5">Expressed during canola infection (PubMed:20507539). Expression is co-regulated with the other genes from the sirodesmin cluster and corresponds with sirodesmin production (PubMed:15387811).</text>
</comment>
<comment type="disruption phenotype">
    <text evidence="4">Leads to reduced production of sirodesmin PL and decreased transcription of sirodesmin PL biosynthetic genes (PubMed:18023597).</text>
</comment>
<proteinExistence type="evidence at transcript level"/>
<name>SIRZ_LEPMC</name>